<dbReference type="EC" id="2.4.99.17" evidence="1"/>
<dbReference type="EMBL" id="L42023">
    <property type="protein sequence ID" value="AAC21912.1"/>
    <property type="molecule type" value="Genomic_DNA"/>
</dbReference>
<dbReference type="PIR" id="B64057">
    <property type="entry name" value="B64057"/>
</dbReference>
<dbReference type="RefSeq" id="NP_438415.1">
    <property type="nucleotide sequence ID" value="NC_000907.1"/>
</dbReference>
<dbReference type="SMR" id="P44595"/>
<dbReference type="STRING" id="71421.HI_0245"/>
<dbReference type="EnsemblBacteria" id="AAC21912">
    <property type="protein sequence ID" value="AAC21912"/>
    <property type="gene ID" value="HI_0245"/>
</dbReference>
<dbReference type="KEGG" id="hin:HI_0245"/>
<dbReference type="PATRIC" id="fig|71421.8.peg.260"/>
<dbReference type="eggNOG" id="COG0809">
    <property type="taxonomic scope" value="Bacteria"/>
</dbReference>
<dbReference type="HOGENOM" id="CLU_039110_1_0_6"/>
<dbReference type="OrthoDB" id="9805933at2"/>
<dbReference type="PhylomeDB" id="P44595"/>
<dbReference type="BioCyc" id="HINF71421:G1GJ1-260-MONOMER"/>
<dbReference type="UniPathway" id="UPA00392"/>
<dbReference type="Proteomes" id="UP000000579">
    <property type="component" value="Chromosome"/>
</dbReference>
<dbReference type="GO" id="GO:0005737">
    <property type="term" value="C:cytoplasm"/>
    <property type="evidence" value="ECO:0007669"/>
    <property type="project" value="UniProtKB-SubCell"/>
</dbReference>
<dbReference type="GO" id="GO:0051075">
    <property type="term" value="F:S-adenosylmethionine:tRNA ribosyltransferase-isomerase activity"/>
    <property type="evidence" value="ECO:0000318"/>
    <property type="project" value="GO_Central"/>
</dbReference>
<dbReference type="GO" id="GO:0008616">
    <property type="term" value="P:queuosine biosynthetic process"/>
    <property type="evidence" value="ECO:0000318"/>
    <property type="project" value="GO_Central"/>
</dbReference>
<dbReference type="GO" id="GO:0002099">
    <property type="term" value="P:tRNA wobble guanine modification"/>
    <property type="evidence" value="ECO:0000318"/>
    <property type="project" value="GO_Central"/>
</dbReference>
<dbReference type="FunFam" id="2.40.10.240:FF:000001">
    <property type="entry name" value="S-adenosylmethionine:tRNA ribosyltransferase-isomerase"/>
    <property type="match status" value="1"/>
</dbReference>
<dbReference type="FunFam" id="3.40.1780.10:FF:000001">
    <property type="entry name" value="S-adenosylmethionine:tRNA ribosyltransferase-isomerase"/>
    <property type="match status" value="1"/>
</dbReference>
<dbReference type="Gene3D" id="2.40.10.240">
    <property type="entry name" value="QueA-like"/>
    <property type="match status" value="1"/>
</dbReference>
<dbReference type="Gene3D" id="3.40.1780.10">
    <property type="entry name" value="QueA-like"/>
    <property type="match status" value="1"/>
</dbReference>
<dbReference type="HAMAP" id="MF_00113">
    <property type="entry name" value="QueA"/>
    <property type="match status" value="1"/>
</dbReference>
<dbReference type="InterPro" id="IPR003699">
    <property type="entry name" value="QueA"/>
</dbReference>
<dbReference type="InterPro" id="IPR042118">
    <property type="entry name" value="QueA_dom1"/>
</dbReference>
<dbReference type="InterPro" id="IPR042119">
    <property type="entry name" value="QueA_dom2"/>
</dbReference>
<dbReference type="InterPro" id="IPR036100">
    <property type="entry name" value="QueA_sf"/>
</dbReference>
<dbReference type="NCBIfam" id="NF001140">
    <property type="entry name" value="PRK00147.1"/>
    <property type="match status" value="1"/>
</dbReference>
<dbReference type="NCBIfam" id="TIGR00113">
    <property type="entry name" value="queA"/>
    <property type="match status" value="1"/>
</dbReference>
<dbReference type="PANTHER" id="PTHR30307">
    <property type="entry name" value="S-ADENOSYLMETHIONINE:TRNA RIBOSYLTRANSFERASE-ISOMERASE"/>
    <property type="match status" value="1"/>
</dbReference>
<dbReference type="PANTHER" id="PTHR30307:SF0">
    <property type="entry name" value="S-ADENOSYLMETHIONINE:TRNA RIBOSYLTRANSFERASE-ISOMERASE"/>
    <property type="match status" value="1"/>
</dbReference>
<dbReference type="Pfam" id="PF02547">
    <property type="entry name" value="Queuosine_synth"/>
    <property type="match status" value="1"/>
</dbReference>
<dbReference type="SUPFAM" id="SSF111337">
    <property type="entry name" value="QueA-like"/>
    <property type="match status" value="1"/>
</dbReference>
<gene>
    <name evidence="1" type="primary">queA</name>
    <name type="ordered locus">HI_0245</name>
</gene>
<evidence type="ECO:0000255" key="1">
    <source>
        <dbReference type="HAMAP-Rule" id="MF_00113"/>
    </source>
</evidence>
<feature type="chain" id="PRO_0000165407" description="S-adenosylmethionine:tRNA ribosyltransferase-isomerase">
    <location>
        <begin position="1"/>
        <end position="363"/>
    </location>
</feature>
<comment type="function">
    <text evidence="1">Transfers and isomerizes the ribose moiety from AdoMet to the 7-aminomethyl group of 7-deazaguanine (preQ1-tRNA) to give epoxyqueuosine (oQ-tRNA).</text>
</comment>
<comment type="catalytic activity">
    <reaction evidence="1">
        <text>7-aminomethyl-7-carbaguanosine(34) in tRNA + S-adenosyl-L-methionine = epoxyqueuosine(34) in tRNA + adenine + L-methionine + 2 H(+)</text>
        <dbReference type="Rhea" id="RHEA:32155"/>
        <dbReference type="Rhea" id="RHEA-COMP:10342"/>
        <dbReference type="Rhea" id="RHEA-COMP:18582"/>
        <dbReference type="ChEBI" id="CHEBI:15378"/>
        <dbReference type="ChEBI" id="CHEBI:16708"/>
        <dbReference type="ChEBI" id="CHEBI:57844"/>
        <dbReference type="ChEBI" id="CHEBI:59789"/>
        <dbReference type="ChEBI" id="CHEBI:82833"/>
        <dbReference type="ChEBI" id="CHEBI:194443"/>
        <dbReference type="EC" id="2.4.99.17"/>
    </reaction>
</comment>
<comment type="pathway">
    <text evidence="1">tRNA modification; tRNA-queuosine biosynthesis.</text>
</comment>
<comment type="subunit">
    <text evidence="1">Monomer.</text>
</comment>
<comment type="subcellular location">
    <subcellularLocation>
        <location evidence="1">Cytoplasm</location>
    </subcellularLocation>
</comment>
<comment type="similarity">
    <text evidence="1">Belongs to the QueA family.</text>
</comment>
<name>QUEA_HAEIN</name>
<organism>
    <name type="scientific">Haemophilus influenzae (strain ATCC 51907 / DSM 11121 / KW20 / Rd)</name>
    <dbReference type="NCBI Taxonomy" id="71421"/>
    <lineage>
        <taxon>Bacteria</taxon>
        <taxon>Pseudomonadati</taxon>
        <taxon>Pseudomonadota</taxon>
        <taxon>Gammaproteobacteria</taxon>
        <taxon>Pasteurellales</taxon>
        <taxon>Pasteurellaceae</taxon>
        <taxon>Haemophilus</taxon>
    </lineage>
</organism>
<sequence length="363" mass="40629">MRVSDFNFDLPDELIARYPKTDRVSCRLLQLNGENGEIFHRTFSDVLDLIDEGDLLIFNNTRVIPARMFGRKASGGKIEVLVERMLDEHRFLAHIRSSKSPKEGAELFLGEDKLGENNGIKAVMKARHGALFEVELSDKSTALLDVLQTIGHMPLPPYIDRPDEEADQECYQTVYSKVPGAVAAPTAGLHFDENLLEKLKAKGVNFEFVTLHVGAGTFQPVRVENIEDHVMHAEYVEVSQEVCNAIIATKKAGKRVIAVGTTSVRSIESAALSAEEFGNPDLIEPYFSDTSIFIYPGKKFRVVDCLITNFHLPESTLIMLVSAFAGYKNTMNAYKHAVKEKYRFFSYGDAMFINKNSNVRGLE</sequence>
<keyword id="KW-0963">Cytoplasm</keyword>
<keyword id="KW-0671">Queuosine biosynthesis</keyword>
<keyword id="KW-1185">Reference proteome</keyword>
<keyword id="KW-0949">S-adenosyl-L-methionine</keyword>
<keyword id="KW-0808">Transferase</keyword>
<proteinExistence type="inferred from homology"/>
<reference key="1">
    <citation type="journal article" date="1995" name="Science">
        <title>Whole-genome random sequencing and assembly of Haemophilus influenzae Rd.</title>
        <authorList>
            <person name="Fleischmann R.D."/>
            <person name="Adams M.D."/>
            <person name="White O."/>
            <person name="Clayton R.A."/>
            <person name="Kirkness E.F."/>
            <person name="Kerlavage A.R."/>
            <person name="Bult C.J."/>
            <person name="Tomb J.-F."/>
            <person name="Dougherty B.A."/>
            <person name="Merrick J.M."/>
            <person name="McKenney K."/>
            <person name="Sutton G.G."/>
            <person name="FitzHugh W."/>
            <person name="Fields C.A."/>
            <person name="Gocayne J.D."/>
            <person name="Scott J.D."/>
            <person name="Shirley R."/>
            <person name="Liu L.-I."/>
            <person name="Glodek A."/>
            <person name="Kelley J.M."/>
            <person name="Weidman J.F."/>
            <person name="Phillips C.A."/>
            <person name="Spriggs T."/>
            <person name="Hedblom E."/>
            <person name="Cotton M.D."/>
            <person name="Utterback T.R."/>
            <person name="Hanna M.C."/>
            <person name="Nguyen D.T."/>
            <person name="Saudek D.M."/>
            <person name="Brandon R.C."/>
            <person name="Fine L.D."/>
            <person name="Fritchman J.L."/>
            <person name="Fuhrmann J.L."/>
            <person name="Geoghagen N.S.M."/>
            <person name="Gnehm C.L."/>
            <person name="McDonald L.A."/>
            <person name="Small K.V."/>
            <person name="Fraser C.M."/>
            <person name="Smith H.O."/>
            <person name="Venter J.C."/>
        </authorList>
    </citation>
    <scope>NUCLEOTIDE SEQUENCE [LARGE SCALE GENOMIC DNA]</scope>
    <source>
        <strain>ATCC 51907 / DSM 11121 / KW20 / Rd</strain>
    </source>
</reference>
<protein>
    <recommendedName>
        <fullName evidence="1">S-adenosylmethionine:tRNA ribosyltransferase-isomerase</fullName>
        <ecNumber evidence="1">2.4.99.17</ecNumber>
    </recommendedName>
    <alternativeName>
        <fullName evidence="1">Queuosine biosynthesis protein QueA</fullName>
    </alternativeName>
</protein>
<accession>P44595</accession>